<evidence type="ECO:0000250" key="1">
    <source>
        <dbReference type="UniProtKB" id="Q9Y657"/>
    </source>
</evidence>
<evidence type="ECO:0000255" key="2"/>
<evidence type="ECO:0000256" key="3">
    <source>
        <dbReference type="SAM" id="MobiDB-lite"/>
    </source>
</evidence>
<evidence type="ECO:0000269" key="4">
    <source>
    </source>
</evidence>
<evidence type="ECO:0000303" key="5">
    <source>
    </source>
</evidence>
<evidence type="ECO:0000305" key="6"/>
<evidence type="ECO:0007829" key="7">
    <source>
        <dbReference type="PDB" id="5A1H"/>
    </source>
</evidence>
<keyword id="KW-0002">3D-structure</keyword>
<keyword id="KW-0025">Alternative splicing</keyword>
<keyword id="KW-1267">Proteomics identification</keyword>
<keyword id="KW-1185">Reference proteome</keyword>
<sequence length="258" mass="29207">MKTPFGKAAAGQRSRTGAGHGSVSVTMIKRKAAHKKHRSRPTSQPRGNIVGCRIQHGWKDGDEPLTQWKGTVLDQVPVNPSLYLIKYDGFDCVYGLELHRDERVSSLEVLPNRVASSRISDTHLAEIMVGKAVEHIFETEEGSKNEWRGMVLAQAPVMNTWFYITYEKDPVLYMYQLLDDYKDGDLRILQDSNDSPLAEREPGEVIDSLVGKQVEYAKDDGSKRTGMVIHQVEAKPSVYFIKFDDDFHIYVYDLVKTS</sequence>
<protein>
    <recommendedName>
        <fullName>Spindlin-3</fullName>
    </recommendedName>
    <alternativeName>
        <fullName>Spindlin-like protein 3</fullName>
        <shortName>SPIN-3</shortName>
    </alternativeName>
</protein>
<accession>Q5JUX0</accession>
<accession>B2RUW3</accession>
<accession>B7Z8W2</accession>
<accession>Q8N5D9</accession>
<name>SPIN3_HUMAN</name>
<comment type="function">
    <text evidence="4">Exhibits H3K4me3-binding activity.</text>
</comment>
<comment type="subunit">
    <text evidence="4">Interacts with C11orf84/SPINDOC (PubMed:29061846).</text>
</comment>
<comment type="interaction">
    <interactant intactId="EBI-1642527">
        <id>Q5JUX0</id>
    </interactant>
    <interactant intactId="EBI-1773488">
        <id>Q9BUA3</id>
        <label>SPINDOC</label>
    </interactant>
    <organismsDiffer>false</organismsDiffer>
    <experiments>4</experiments>
</comment>
<comment type="alternative products">
    <event type="alternative splicing"/>
    <isoform>
        <id>Q5JUX0-1</id>
        <name>1</name>
        <sequence type="displayed"/>
    </isoform>
    <isoform>
        <id>Q5JUX0-2</id>
        <name>2</name>
        <sequence type="described" ref="VSP_021482 VSP_021483"/>
    </isoform>
</comment>
<comment type="miscellaneous">
    <molecule>Isoform 2</molecule>
    <text evidence="6">May be produced at very low levels due to a premature stop codon in the mRNA, leading to nonsense-mediated mRNA decay.</text>
</comment>
<comment type="similarity">
    <text evidence="6">Belongs to the SPIN/STSY family.</text>
</comment>
<feature type="chain" id="PRO_0000259591" description="Spindlin-3">
    <location>
        <begin position="1"/>
        <end position="258"/>
    </location>
</feature>
<feature type="region of interest" description="Disordered" evidence="3">
    <location>
        <begin position="1"/>
        <end position="23"/>
    </location>
</feature>
<feature type="region of interest" description="Tudor-like domain 1" evidence="2">
    <location>
        <begin position="50"/>
        <end position="99"/>
    </location>
</feature>
<feature type="region of interest" description="Tudor-like domain 2" evidence="2">
    <location>
        <begin position="129"/>
        <end position="178"/>
    </location>
</feature>
<feature type="region of interest" description="Histone H3K4me3 and H3R8me2a binding" evidence="1">
    <location>
        <position position="138"/>
    </location>
</feature>
<feature type="region of interest" description="Tudor-like domain 3" evidence="2">
    <location>
        <begin position="210"/>
        <end position="255"/>
    </location>
</feature>
<feature type="region of interest" description="Histone H3K4me3 and H3R8me2a binding" evidence="1">
    <location>
        <begin position="246"/>
        <end position="248"/>
    </location>
</feature>
<feature type="site" description="Histone H3K4me3 and H3R8me2a binding" evidence="1">
    <location>
        <position position="169"/>
    </location>
</feature>
<feature type="site" description="Histone H3K4me3 and H3R8me2a binding" evidence="1">
    <location>
        <position position="176"/>
    </location>
</feature>
<feature type="site" description="Histone H3K4me3 and H3R8me2a binding" evidence="1">
    <location>
        <position position="180"/>
    </location>
</feature>
<feature type="splice variant" id="VSP_021482" description="In isoform 2." evidence="5">
    <original>VP</original>
    <variation>LL</variation>
    <location>
        <begin position="76"/>
        <end position="77"/>
    </location>
</feature>
<feature type="splice variant" id="VSP_021483" description="In isoform 2." evidence="5">
    <location>
        <begin position="78"/>
        <end position="258"/>
    </location>
</feature>
<feature type="sequence conflict" description="In Ref. 1; BAH14098." evidence="6" ref="1">
    <original>P</original>
    <variation>A</variation>
    <location>
        <position position="4"/>
    </location>
</feature>
<feature type="strand" evidence="7">
    <location>
        <begin position="53"/>
        <end position="58"/>
    </location>
</feature>
<feature type="strand" evidence="7">
    <location>
        <begin position="66"/>
        <end position="75"/>
    </location>
</feature>
<feature type="strand" evidence="7">
    <location>
        <begin position="83"/>
        <end position="87"/>
    </location>
</feature>
<feature type="strand" evidence="7">
    <location>
        <begin position="94"/>
        <end position="96"/>
    </location>
</feature>
<feature type="turn" evidence="7">
    <location>
        <begin position="98"/>
        <end position="100"/>
    </location>
</feature>
<feature type="strand" evidence="7">
    <location>
        <begin position="104"/>
        <end position="109"/>
    </location>
</feature>
<feature type="helix" evidence="7">
    <location>
        <begin position="123"/>
        <end position="128"/>
    </location>
</feature>
<feature type="strand" evidence="7">
    <location>
        <begin position="132"/>
        <end position="138"/>
    </location>
</feature>
<feature type="strand" evidence="7">
    <location>
        <begin position="144"/>
        <end position="154"/>
    </location>
</feature>
<feature type="strand" evidence="7">
    <location>
        <begin position="156"/>
        <end position="158"/>
    </location>
</feature>
<feature type="strand" evidence="7">
    <location>
        <begin position="162"/>
        <end position="166"/>
    </location>
</feature>
<feature type="strand" evidence="7">
    <location>
        <begin position="169"/>
        <end position="175"/>
    </location>
</feature>
<feature type="helix" evidence="7">
    <location>
        <begin position="177"/>
        <end position="183"/>
    </location>
</feature>
<feature type="strand" evidence="7">
    <location>
        <begin position="186"/>
        <end position="188"/>
    </location>
</feature>
<feature type="strand" evidence="7">
    <location>
        <begin position="213"/>
        <end position="217"/>
    </location>
</feature>
<feature type="strand" evidence="7">
    <location>
        <begin position="223"/>
        <end position="231"/>
    </location>
</feature>
<feature type="strand" evidence="7">
    <location>
        <begin position="238"/>
        <end position="243"/>
    </location>
</feature>
<feature type="strand" evidence="7">
    <location>
        <begin position="250"/>
        <end position="253"/>
    </location>
</feature>
<dbReference type="EMBL" id="AK304047">
    <property type="protein sequence ID" value="BAH14098.1"/>
    <property type="molecule type" value="mRNA"/>
</dbReference>
<dbReference type="EMBL" id="AL139397">
    <property type="status" value="NOT_ANNOTATED_CDS"/>
    <property type="molecule type" value="Genomic_DNA"/>
</dbReference>
<dbReference type="EMBL" id="BC018073">
    <property type="status" value="NOT_ANNOTATED_CDS"/>
    <property type="molecule type" value="mRNA"/>
</dbReference>
<dbReference type="EMBL" id="BC032490">
    <property type="status" value="NOT_ANNOTATED_CDS"/>
    <property type="molecule type" value="mRNA"/>
</dbReference>
<dbReference type="EMBL" id="BC146899">
    <property type="protein sequence ID" value="AAI46900.1"/>
    <property type="molecule type" value="mRNA"/>
</dbReference>
<dbReference type="EMBL" id="BC146906">
    <property type="protein sequence ID" value="AAI46907.1"/>
    <property type="molecule type" value="mRNA"/>
</dbReference>
<dbReference type="CCDS" id="CCDS43963.1">
    <molecule id="Q5JUX0-1"/>
</dbReference>
<dbReference type="RefSeq" id="NP_001010862.2">
    <molecule id="Q5JUX0-1"/>
    <property type="nucleotide sequence ID" value="NM_001010862.3"/>
</dbReference>
<dbReference type="RefSeq" id="XP_006724640.1">
    <molecule id="Q5JUX0-1"/>
    <property type="nucleotide sequence ID" value="XM_006724577.4"/>
</dbReference>
<dbReference type="RefSeq" id="XP_006724641.1">
    <molecule id="Q5JUX0-1"/>
    <property type="nucleotide sequence ID" value="XM_006724578.4"/>
</dbReference>
<dbReference type="RefSeq" id="XP_016884804.1">
    <molecule id="Q5JUX0-1"/>
    <property type="nucleotide sequence ID" value="XM_017029315.2"/>
</dbReference>
<dbReference type="RefSeq" id="XP_054182568.1">
    <molecule id="Q5JUX0-1"/>
    <property type="nucleotide sequence ID" value="XM_054326593.1"/>
</dbReference>
<dbReference type="RefSeq" id="XP_054182569.1">
    <molecule id="Q5JUX0-1"/>
    <property type="nucleotide sequence ID" value="XM_054326594.1"/>
</dbReference>
<dbReference type="RefSeq" id="XP_054182570.1">
    <molecule id="Q5JUX0-1"/>
    <property type="nucleotide sequence ID" value="XM_054326595.1"/>
</dbReference>
<dbReference type="PDB" id="5A1H">
    <property type="method" value="X-ray"/>
    <property type="resolution" value="2.00 A"/>
    <property type="chains" value="A/B/C/D=45-258"/>
</dbReference>
<dbReference type="PDBsum" id="5A1H"/>
<dbReference type="SMR" id="Q5JUX0"/>
<dbReference type="BioGRID" id="127992">
    <property type="interactions" value="62"/>
</dbReference>
<dbReference type="FunCoup" id="Q5JUX0">
    <property type="interactions" value="450"/>
</dbReference>
<dbReference type="IntAct" id="Q5JUX0">
    <property type="interactions" value="19"/>
</dbReference>
<dbReference type="MINT" id="Q5JUX0"/>
<dbReference type="STRING" id="9606.ENSP00000492795"/>
<dbReference type="BindingDB" id="Q5JUX0"/>
<dbReference type="ChEMBL" id="CHEMBL4523325"/>
<dbReference type="GlyGen" id="Q5JUX0">
    <property type="glycosylation" value="1 site, 1 O-linked glycan (1 site)"/>
</dbReference>
<dbReference type="iPTMnet" id="Q5JUX0"/>
<dbReference type="PhosphoSitePlus" id="Q5JUX0"/>
<dbReference type="BioMuta" id="SPIN3"/>
<dbReference type="DMDM" id="74742352"/>
<dbReference type="jPOST" id="Q5JUX0"/>
<dbReference type="MassIVE" id="Q5JUX0"/>
<dbReference type="PaxDb" id="9606-ENSP00000364054"/>
<dbReference type="PeptideAtlas" id="Q5JUX0"/>
<dbReference type="ProteomicsDB" id="63302">
    <molecule id="Q5JUX0-1"/>
</dbReference>
<dbReference type="ProteomicsDB" id="63303">
    <molecule id="Q5JUX0-2"/>
</dbReference>
<dbReference type="Pumba" id="Q5JUX0"/>
<dbReference type="Antibodypedia" id="432">
    <property type="antibodies" value="50 antibodies from 11 providers"/>
</dbReference>
<dbReference type="DNASU" id="169981"/>
<dbReference type="Ensembl" id="ENST00000374919.6">
    <molecule id="Q5JUX0-1"/>
    <property type="protein sequence ID" value="ENSP00000364054.3"/>
    <property type="gene ID" value="ENSG00000204271.13"/>
</dbReference>
<dbReference type="Ensembl" id="ENST00000475785.7">
    <molecule id="Q5JUX0-2"/>
    <property type="protein sequence ID" value="ENSP00000436805.1"/>
    <property type="gene ID" value="ENSG00000204271.13"/>
</dbReference>
<dbReference type="Ensembl" id="ENST00000478405.1">
    <molecule id="Q5JUX0-2"/>
    <property type="protein sequence ID" value="ENSP00000433337.1"/>
    <property type="gene ID" value="ENSG00000204271.13"/>
</dbReference>
<dbReference type="Ensembl" id="ENST00000638257.1">
    <molecule id="Q5JUX0-1"/>
    <property type="protein sequence ID" value="ENSP00000492795.1"/>
    <property type="gene ID" value="ENSG00000204271.13"/>
</dbReference>
<dbReference type="Ensembl" id="ENST00000638289.1">
    <molecule id="Q5JUX0-1"/>
    <property type="protein sequence ID" value="ENSP00000491751.1"/>
    <property type="gene ID" value="ENSG00000204271.13"/>
</dbReference>
<dbReference type="Ensembl" id="ENST00000638386.1">
    <molecule id="Q5JUX0-1"/>
    <property type="protein sequence ID" value="ENSP00000491624.1"/>
    <property type="gene ID" value="ENSG00000204271.13"/>
</dbReference>
<dbReference type="Ensembl" id="ENST00000638664.1">
    <molecule id="Q5JUX0-2"/>
    <property type="protein sequence ID" value="ENSP00000492829.1"/>
    <property type="gene ID" value="ENSG00000204271.13"/>
</dbReference>
<dbReference type="Ensembl" id="ENST00000638712.1">
    <molecule id="Q5JUX0-1"/>
    <property type="protein sequence ID" value="ENSP00000492344.1"/>
    <property type="gene ID" value="ENSG00000204271.13"/>
</dbReference>
<dbReference type="Ensembl" id="ENST00000638819.1">
    <molecule id="Q5JUX0-2"/>
    <property type="protein sequence ID" value="ENSP00000491334.1"/>
    <property type="gene ID" value="ENSG00000204271.13"/>
</dbReference>
<dbReference type="Ensembl" id="ENST00000638834.1">
    <molecule id="Q5JUX0-2"/>
    <property type="protein sequence ID" value="ENSP00000492685.1"/>
    <property type="gene ID" value="ENSG00000204271.13"/>
</dbReference>
<dbReference type="Ensembl" id="ENST00000638873.1">
    <molecule id="Q5JUX0-2"/>
    <property type="protein sequence ID" value="ENSP00000492648.1"/>
    <property type="gene ID" value="ENSG00000204271.13"/>
</dbReference>
<dbReference type="Ensembl" id="ENST00000638940.1">
    <molecule id="Q5JUX0-2"/>
    <property type="protein sequence ID" value="ENSP00000491878.1"/>
    <property type="gene ID" value="ENSG00000204271.13"/>
</dbReference>
<dbReference type="Ensembl" id="ENST00000639000.1">
    <molecule id="Q5JUX0-2"/>
    <property type="protein sequence ID" value="ENSP00000491947.1"/>
    <property type="gene ID" value="ENSG00000204271.13"/>
</dbReference>
<dbReference type="Ensembl" id="ENST00000639007.1">
    <molecule id="Q5JUX0-1"/>
    <property type="protein sequence ID" value="ENSP00000492381.1"/>
    <property type="gene ID" value="ENSG00000204271.13"/>
</dbReference>
<dbReference type="Ensembl" id="ENST00000639053.1">
    <molecule id="Q5JUX0-2"/>
    <property type="protein sequence ID" value="ENSP00000491667.1"/>
    <property type="gene ID" value="ENSG00000204271.13"/>
</dbReference>
<dbReference type="Ensembl" id="ENST00000639257.1">
    <molecule id="Q5JUX0-2"/>
    <property type="protein sequence ID" value="ENSP00000492259.1"/>
    <property type="gene ID" value="ENSG00000204271.13"/>
</dbReference>
<dbReference type="Ensembl" id="ENST00000639418.1">
    <molecule id="Q5JUX0-2"/>
    <property type="protein sequence ID" value="ENSP00000491050.1"/>
    <property type="gene ID" value="ENSG00000204271.13"/>
</dbReference>
<dbReference type="Ensembl" id="ENST00000639482.1">
    <molecule id="Q5JUX0-2"/>
    <property type="protein sequence ID" value="ENSP00000491221.1"/>
    <property type="gene ID" value="ENSG00000204271.13"/>
</dbReference>
<dbReference type="Ensembl" id="ENST00000639605.1">
    <molecule id="Q5JUX0-1"/>
    <property type="protein sequence ID" value="ENSP00000491179.1"/>
    <property type="gene ID" value="ENSG00000204271.13"/>
</dbReference>
<dbReference type="Ensembl" id="ENST00000639607.1">
    <molecule id="Q5JUX0-2"/>
    <property type="protein sequence ID" value="ENSP00000492130.1"/>
    <property type="gene ID" value="ENSG00000204271.13"/>
</dbReference>
<dbReference type="Ensembl" id="ENST00000639794.1">
    <molecule id="Q5JUX0-2"/>
    <property type="protein sequence ID" value="ENSP00000491103.1"/>
    <property type="gene ID" value="ENSG00000204271.13"/>
</dbReference>
<dbReference type="Ensembl" id="ENST00000639809.1">
    <molecule id="Q5JUX0-2"/>
    <property type="protein sequence ID" value="ENSP00000491646.1"/>
    <property type="gene ID" value="ENSG00000204271.13"/>
</dbReference>
<dbReference type="Ensembl" id="ENST00000639888.1">
    <molecule id="Q5JUX0-2"/>
    <property type="protein sequence ID" value="ENSP00000491629.1"/>
    <property type="gene ID" value="ENSG00000204271.13"/>
</dbReference>
<dbReference type="Ensembl" id="ENST00000639895.1">
    <molecule id="Q5JUX0-2"/>
    <property type="protein sequence ID" value="ENSP00000491610.1"/>
    <property type="gene ID" value="ENSG00000204271.13"/>
</dbReference>
<dbReference type="Ensembl" id="ENST00000639956.1">
    <molecule id="Q5JUX0-2"/>
    <property type="protein sequence ID" value="ENSP00000491098.1"/>
    <property type="gene ID" value="ENSG00000204271.13"/>
</dbReference>
<dbReference type="Ensembl" id="ENST00000640039.1">
    <molecule id="Q5JUX0-2"/>
    <property type="protein sequence ID" value="ENSP00000491607.1"/>
    <property type="gene ID" value="ENSG00000204271.13"/>
</dbReference>
<dbReference type="Ensembl" id="ENST00000640101.1">
    <molecule id="Q5JUX0-2"/>
    <property type="protein sequence ID" value="ENSP00000492502.1"/>
    <property type="gene ID" value="ENSG00000204271.13"/>
</dbReference>
<dbReference type="Ensembl" id="ENST00000640104.1">
    <molecule id="Q5JUX0-2"/>
    <property type="protein sequence ID" value="ENSP00000491400.1"/>
    <property type="gene ID" value="ENSG00000204271.13"/>
</dbReference>
<dbReference type="Ensembl" id="ENST00000640131.1">
    <molecule id="Q5JUX0-2"/>
    <property type="protein sequence ID" value="ENSP00000491666.1"/>
    <property type="gene ID" value="ENSG00000204271.13"/>
</dbReference>
<dbReference type="Ensembl" id="ENST00000640187.1">
    <molecule id="Q5JUX0-2"/>
    <property type="protein sequence ID" value="ENSP00000492486.1"/>
    <property type="gene ID" value="ENSG00000204271.13"/>
</dbReference>
<dbReference type="Ensembl" id="ENST00000640421.1">
    <molecule id="Q5JUX0-2"/>
    <property type="protein sequence ID" value="ENSP00000491130.1"/>
    <property type="gene ID" value="ENSG00000204271.13"/>
</dbReference>
<dbReference type="Ensembl" id="ENST00000640463.1">
    <molecule id="Q5JUX0-2"/>
    <property type="protein sequence ID" value="ENSP00000491882.1"/>
    <property type="gene ID" value="ENSG00000204271.13"/>
</dbReference>
<dbReference type="Ensembl" id="ENST00000640507.1">
    <molecule id="Q5JUX0-2"/>
    <property type="protein sequence ID" value="ENSP00000492445.1"/>
    <property type="gene ID" value="ENSG00000204271.13"/>
</dbReference>
<dbReference type="Ensembl" id="ENST00000640511.1">
    <molecule id="Q5JUX0-2"/>
    <property type="protein sequence ID" value="ENSP00000491321.1"/>
    <property type="gene ID" value="ENSG00000204271.13"/>
</dbReference>
<dbReference type="Ensembl" id="ENST00000640577.1">
    <molecule id="Q5JUX0-2"/>
    <property type="protein sequence ID" value="ENSP00000492824.1"/>
    <property type="gene ID" value="ENSG00000204271.13"/>
</dbReference>
<dbReference type="Ensembl" id="ENST00000640717.1">
    <molecule id="Q5JUX0-2"/>
    <property type="protein sequence ID" value="ENSP00000491217.1"/>
    <property type="gene ID" value="ENSG00000204271.13"/>
</dbReference>
<dbReference type="Ensembl" id="ENST00000640728.1">
    <molecule id="Q5JUX0-2"/>
    <property type="protein sequence ID" value="ENSP00000492383.1"/>
    <property type="gene ID" value="ENSG00000204271.13"/>
</dbReference>
<dbReference type="GeneID" id="169981"/>
<dbReference type="KEGG" id="hsa:169981"/>
<dbReference type="MANE-Select" id="ENST00000374919.6">
    <property type="protein sequence ID" value="ENSP00000364054.3"/>
    <property type="RefSeq nucleotide sequence ID" value="NM_001010862.3"/>
    <property type="RefSeq protein sequence ID" value="NP_001010862.2"/>
</dbReference>
<dbReference type="UCSC" id="uc004dux.2">
    <molecule id="Q5JUX0-1"/>
    <property type="organism name" value="human"/>
</dbReference>
<dbReference type="AGR" id="HGNC:27272"/>
<dbReference type="CTD" id="169981"/>
<dbReference type="DisGeNET" id="169981"/>
<dbReference type="GeneCards" id="SPIN3"/>
<dbReference type="HGNC" id="HGNC:27272">
    <property type="gene designation" value="SPIN3"/>
</dbReference>
<dbReference type="HPA" id="ENSG00000204271">
    <property type="expression patterns" value="Low tissue specificity"/>
</dbReference>
<dbReference type="neXtProt" id="NX_Q5JUX0"/>
<dbReference type="OpenTargets" id="ENSG00000204271"/>
<dbReference type="PharmGKB" id="PA134909757"/>
<dbReference type="VEuPathDB" id="HostDB:ENSG00000204271"/>
<dbReference type="eggNOG" id="ENOG502QRYD">
    <property type="taxonomic scope" value="Eukaryota"/>
</dbReference>
<dbReference type="GeneTree" id="ENSGT00950000182925"/>
<dbReference type="HOGENOM" id="CLU_068595_2_0_1"/>
<dbReference type="InParanoid" id="Q5JUX0"/>
<dbReference type="OMA" id="QICETIC"/>
<dbReference type="OrthoDB" id="9944558at2759"/>
<dbReference type="PAN-GO" id="Q5JUX0">
    <property type="GO annotations" value="4 GO annotations based on evolutionary models"/>
</dbReference>
<dbReference type="PhylomeDB" id="Q5JUX0"/>
<dbReference type="TreeFam" id="TF332665"/>
<dbReference type="PathwayCommons" id="Q5JUX0"/>
<dbReference type="SignaLink" id="Q5JUX0"/>
<dbReference type="BioGRID-ORCS" id="169981">
    <property type="hits" value="18 hits in 781 CRISPR screens"/>
</dbReference>
<dbReference type="ChiTaRS" id="SPIN3">
    <property type="organism name" value="human"/>
</dbReference>
<dbReference type="EvolutionaryTrace" id="Q5JUX0"/>
<dbReference type="GenomeRNAi" id="169981"/>
<dbReference type="Pharos" id="Q5JUX0">
    <property type="development level" value="Tchem"/>
</dbReference>
<dbReference type="PRO" id="PR:Q5JUX0"/>
<dbReference type="Proteomes" id="UP000005640">
    <property type="component" value="Chromosome X"/>
</dbReference>
<dbReference type="RNAct" id="Q5JUX0">
    <property type="molecule type" value="protein"/>
</dbReference>
<dbReference type="Bgee" id="ENSG00000204271">
    <property type="expression patterns" value="Expressed in secondary oocyte and 145 other cell types or tissues"/>
</dbReference>
<dbReference type="ExpressionAtlas" id="Q5JUX0">
    <property type="expression patterns" value="baseline and differential"/>
</dbReference>
<dbReference type="GO" id="GO:0005829">
    <property type="term" value="C:cytosol"/>
    <property type="evidence" value="ECO:0000318"/>
    <property type="project" value="GO_Central"/>
</dbReference>
<dbReference type="GO" id="GO:0005654">
    <property type="term" value="C:nucleoplasm"/>
    <property type="evidence" value="ECO:0000318"/>
    <property type="project" value="GO_Central"/>
</dbReference>
<dbReference type="GO" id="GO:0140002">
    <property type="term" value="F:histone H3K4me3 reader activity"/>
    <property type="evidence" value="ECO:0000314"/>
    <property type="project" value="UniProtKB"/>
</dbReference>
<dbReference type="GO" id="GO:0035064">
    <property type="term" value="F:methylated histone binding"/>
    <property type="evidence" value="ECO:0000318"/>
    <property type="project" value="GO_Central"/>
</dbReference>
<dbReference type="GO" id="GO:0007276">
    <property type="term" value="P:gamete generation"/>
    <property type="evidence" value="ECO:0007669"/>
    <property type="project" value="InterPro"/>
</dbReference>
<dbReference type="GO" id="GO:0006355">
    <property type="term" value="P:regulation of DNA-templated transcription"/>
    <property type="evidence" value="ECO:0000318"/>
    <property type="project" value="GO_Central"/>
</dbReference>
<dbReference type="FunFam" id="2.80.10.70:FF:000001">
    <property type="entry name" value="Spindlin 1"/>
    <property type="match status" value="1"/>
</dbReference>
<dbReference type="Gene3D" id="2.80.10.70">
    <property type="entry name" value="Spindlin/Ssty"/>
    <property type="match status" value="1"/>
</dbReference>
<dbReference type="InterPro" id="IPR003671">
    <property type="entry name" value="SPIN/Ssty"/>
</dbReference>
<dbReference type="InterPro" id="IPR042567">
    <property type="entry name" value="SPIN/Ssty_sf"/>
</dbReference>
<dbReference type="PANTHER" id="PTHR10405">
    <property type="entry name" value="SPINDLIN"/>
    <property type="match status" value="1"/>
</dbReference>
<dbReference type="Pfam" id="PF02513">
    <property type="entry name" value="Spin-Ssty"/>
    <property type="match status" value="3"/>
</dbReference>
<reference key="1">
    <citation type="journal article" date="2004" name="Nat. Genet.">
        <title>Complete sequencing and characterization of 21,243 full-length human cDNAs.</title>
        <authorList>
            <person name="Ota T."/>
            <person name="Suzuki Y."/>
            <person name="Nishikawa T."/>
            <person name="Otsuki T."/>
            <person name="Sugiyama T."/>
            <person name="Irie R."/>
            <person name="Wakamatsu A."/>
            <person name="Hayashi K."/>
            <person name="Sato H."/>
            <person name="Nagai K."/>
            <person name="Kimura K."/>
            <person name="Makita H."/>
            <person name="Sekine M."/>
            <person name="Obayashi M."/>
            <person name="Nishi T."/>
            <person name="Shibahara T."/>
            <person name="Tanaka T."/>
            <person name="Ishii S."/>
            <person name="Yamamoto J."/>
            <person name="Saito K."/>
            <person name="Kawai Y."/>
            <person name="Isono Y."/>
            <person name="Nakamura Y."/>
            <person name="Nagahari K."/>
            <person name="Murakami K."/>
            <person name="Yasuda T."/>
            <person name="Iwayanagi T."/>
            <person name="Wagatsuma M."/>
            <person name="Shiratori A."/>
            <person name="Sudo H."/>
            <person name="Hosoiri T."/>
            <person name="Kaku Y."/>
            <person name="Kodaira H."/>
            <person name="Kondo H."/>
            <person name="Sugawara M."/>
            <person name="Takahashi M."/>
            <person name="Kanda K."/>
            <person name="Yokoi T."/>
            <person name="Furuya T."/>
            <person name="Kikkawa E."/>
            <person name="Omura Y."/>
            <person name="Abe K."/>
            <person name="Kamihara K."/>
            <person name="Katsuta N."/>
            <person name="Sato K."/>
            <person name="Tanikawa M."/>
            <person name="Yamazaki M."/>
            <person name="Ninomiya K."/>
            <person name="Ishibashi T."/>
            <person name="Yamashita H."/>
            <person name="Murakawa K."/>
            <person name="Fujimori K."/>
            <person name="Tanai H."/>
            <person name="Kimata M."/>
            <person name="Watanabe M."/>
            <person name="Hiraoka S."/>
            <person name="Chiba Y."/>
            <person name="Ishida S."/>
            <person name="Ono Y."/>
            <person name="Takiguchi S."/>
            <person name="Watanabe S."/>
            <person name="Yosida M."/>
            <person name="Hotuta T."/>
            <person name="Kusano J."/>
            <person name="Kanehori K."/>
            <person name="Takahashi-Fujii A."/>
            <person name="Hara H."/>
            <person name="Tanase T.-O."/>
            <person name="Nomura Y."/>
            <person name="Togiya S."/>
            <person name="Komai F."/>
            <person name="Hara R."/>
            <person name="Takeuchi K."/>
            <person name="Arita M."/>
            <person name="Imose N."/>
            <person name="Musashino K."/>
            <person name="Yuuki H."/>
            <person name="Oshima A."/>
            <person name="Sasaki N."/>
            <person name="Aotsuka S."/>
            <person name="Yoshikawa Y."/>
            <person name="Matsunawa H."/>
            <person name="Ichihara T."/>
            <person name="Shiohata N."/>
            <person name="Sano S."/>
            <person name="Moriya S."/>
            <person name="Momiyama H."/>
            <person name="Satoh N."/>
            <person name="Takami S."/>
            <person name="Terashima Y."/>
            <person name="Suzuki O."/>
            <person name="Nakagawa S."/>
            <person name="Senoh A."/>
            <person name="Mizoguchi H."/>
            <person name="Goto Y."/>
            <person name="Shimizu F."/>
            <person name="Wakebe H."/>
            <person name="Hishigaki H."/>
            <person name="Watanabe T."/>
            <person name="Sugiyama A."/>
            <person name="Takemoto M."/>
            <person name="Kawakami B."/>
            <person name="Yamazaki M."/>
            <person name="Watanabe K."/>
            <person name="Kumagai A."/>
            <person name="Itakura S."/>
            <person name="Fukuzumi Y."/>
            <person name="Fujimori Y."/>
            <person name="Komiyama M."/>
            <person name="Tashiro H."/>
            <person name="Tanigami A."/>
            <person name="Fujiwara T."/>
            <person name="Ono T."/>
            <person name="Yamada K."/>
            <person name="Fujii Y."/>
            <person name="Ozaki K."/>
            <person name="Hirao M."/>
            <person name="Ohmori Y."/>
            <person name="Kawabata A."/>
            <person name="Hikiji T."/>
            <person name="Kobatake N."/>
            <person name="Inagaki H."/>
            <person name="Ikema Y."/>
            <person name="Okamoto S."/>
            <person name="Okitani R."/>
            <person name="Kawakami T."/>
            <person name="Noguchi S."/>
            <person name="Itoh T."/>
            <person name="Shigeta K."/>
            <person name="Senba T."/>
            <person name="Matsumura K."/>
            <person name="Nakajima Y."/>
            <person name="Mizuno T."/>
            <person name="Morinaga M."/>
            <person name="Sasaki M."/>
            <person name="Togashi T."/>
            <person name="Oyama M."/>
            <person name="Hata H."/>
            <person name="Watanabe M."/>
            <person name="Komatsu T."/>
            <person name="Mizushima-Sugano J."/>
            <person name="Satoh T."/>
            <person name="Shirai Y."/>
            <person name="Takahashi Y."/>
            <person name="Nakagawa K."/>
            <person name="Okumura K."/>
            <person name="Nagase T."/>
            <person name="Nomura N."/>
            <person name="Kikuchi H."/>
            <person name="Masuho Y."/>
            <person name="Yamashita R."/>
            <person name="Nakai K."/>
            <person name="Yada T."/>
            <person name="Nakamura Y."/>
            <person name="Ohara O."/>
            <person name="Isogai T."/>
            <person name="Sugano S."/>
        </authorList>
    </citation>
    <scope>NUCLEOTIDE SEQUENCE [LARGE SCALE MRNA] (ISOFORM 1)</scope>
    <source>
        <tissue>Trachea</tissue>
    </source>
</reference>
<reference key="2">
    <citation type="journal article" date="2005" name="Nature">
        <title>The DNA sequence of the human X chromosome.</title>
        <authorList>
            <person name="Ross M.T."/>
            <person name="Grafham D.V."/>
            <person name="Coffey A.J."/>
            <person name="Scherer S."/>
            <person name="McLay K."/>
            <person name="Muzny D."/>
            <person name="Platzer M."/>
            <person name="Howell G.R."/>
            <person name="Burrows C."/>
            <person name="Bird C.P."/>
            <person name="Frankish A."/>
            <person name="Lovell F.L."/>
            <person name="Howe K.L."/>
            <person name="Ashurst J.L."/>
            <person name="Fulton R.S."/>
            <person name="Sudbrak R."/>
            <person name="Wen G."/>
            <person name="Jones M.C."/>
            <person name="Hurles M.E."/>
            <person name="Andrews T.D."/>
            <person name="Scott C.E."/>
            <person name="Searle S."/>
            <person name="Ramser J."/>
            <person name="Whittaker A."/>
            <person name="Deadman R."/>
            <person name="Carter N.P."/>
            <person name="Hunt S.E."/>
            <person name="Chen R."/>
            <person name="Cree A."/>
            <person name="Gunaratne P."/>
            <person name="Havlak P."/>
            <person name="Hodgson A."/>
            <person name="Metzker M.L."/>
            <person name="Richards S."/>
            <person name="Scott G."/>
            <person name="Steffen D."/>
            <person name="Sodergren E."/>
            <person name="Wheeler D.A."/>
            <person name="Worley K.C."/>
            <person name="Ainscough R."/>
            <person name="Ambrose K.D."/>
            <person name="Ansari-Lari M.A."/>
            <person name="Aradhya S."/>
            <person name="Ashwell R.I."/>
            <person name="Babbage A.K."/>
            <person name="Bagguley C.L."/>
            <person name="Ballabio A."/>
            <person name="Banerjee R."/>
            <person name="Barker G.E."/>
            <person name="Barlow K.F."/>
            <person name="Barrett I.P."/>
            <person name="Bates K.N."/>
            <person name="Beare D.M."/>
            <person name="Beasley H."/>
            <person name="Beasley O."/>
            <person name="Beck A."/>
            <person name="Bethel G."/>
            <person name="Blechschmidt K."/>
            <person name="Brady N."/>
            <person name="Bray-Allen S."/>
            <person name="Bridgeman A.M."/>
            <person name="Brown A.J."/>
            <person name="Brown M.J."/>
            <person name="Bonnin D."/>
            <person name="Bruford E.A."/>
            <person name="Buhay C."/>
            <person name="Burch P."/>
            <person name="Burford D."/>
            <person name="Burgess J."/>
            <person name="Burrill W."/>
            <person name="Burton J."/>
            <person name="Bye J.M."/>
            <person name="Carder C."/>
            <person name="Carrel L."/>
            <person name="Chako J."/>
            <person name="Chapman J.C."/>
            <person name="Chavez D."/>
            <person name="Chen E."/>
            <person name="Chen G."/>
            <person name="Chen Y."/>
            <person name="Chen Z."/>
            <person name="Chinault C."/>
            <person name="Ciccodicola A."/>
            <person name="Clark S.Y."/>
            <person name="Clarke G."/>
            <person name="Clee C.M."/>
            <person name="Clegg S."/>
            <person name="Clerc-Blankenburg K."/>
            <person name="Clifford K."/>
            <person name="Cobley V."/>
            <person name="Cole C.G."/>
            <person name="Conquer J.S."/>
            <person name="Corby N."/>
            <person name="Connor R.E."/>
            <person name="David R."/>
            <person name="Davies J."/>
            <person name="Davis C."/>
            <person name="Davis J."/>
            <person name="Delgado O."/>
            <person name="Deshazo D."/>
            <person name="Dhami P."/>
            <person name="Ding Y."/>
            <person name="Dinh H."/>
            <person name="Dodsworth S."/>
            <person name="Draper H."/>
            <person name="Dugan-Rocha S."/>
            <person name="Dunham A."/>
            <person name="Dunn M."/>
            <person name="Durbin K.J."/>
            <person name="Dutta I."/>
            <person name="Eades T."/>
            <person name="Ellwood M."/>
            <person name="Emery-Cohen A."/>
            <person name="Errington H."/>
            <person name="Evans K.L."/>
            <person name="Faulkner L."/>
            <person name="Francis F."/>
            <person name="Frankland J."/>
            <person name="Fraser A.E."/>
            <person name="Galgoczy P."/>
            <person name="Gilbert J."/>
            <person name="Gill R."/>
            <person name="Gloeckner G."/>
            <person name="Gregory S.G."/>
            <person name="Gribble S."/>
            <person name="Griffiths C."/>
            <person name="Grocock R."/>
            <person name="Gu Y."/>
            <person name="Gwilliam R."/>
            <person name="Hamilton C."/>
            <person name="Hart E.A."/>
            <person name="Hawes A."/>
            <person name="Heath P.D."/>
            <person name="Heitmann K."/>
            <person name="Hennig S."/>
            <person name="Hernandez J."/>
            <person name="Hinzmann B."/>
            <person name="Ho S."/>
            <person name="Hoffs M."/>
            <person name="Howden P.J."/>
            <person name="Huckle E.J."/>
            <person name="Hume J."/>
            <person name="Hunt P.J."/>
            <person name="Hunt A.R."/>
            <person name="Isherwood J."/>
            <person name="Jacob L."/>
            <person name="Johnson D."/>
            <person name="Jones S."/>
            <person name="de Jong P.J."/>
            <person name="Joseph S.S."/>
            <person name="Keenan S."/>
            <person name="Kelly S."/>
            <person name="Kershaw J.K."/>
            <person name="Khan Z."/>
            <person name="Kioschis P."/>
            <person name="Klages S."/>
            <person name="Knights A.J."/>
            <person name="Kosiura A."/>
            <person name="Kovar-Smith C."/>
            <person name="Laird G.K."/>
            <person name="Langford C."/>
            <person name="Lawlor S."/>
            <person name="Leversha M."/>
            <person name="Lewis L."/>
            <person name="Liu W."/>
            <person name="Lloyd C."/>
            <person name="Lloyd D.M."/>
            <person name="Loulseged H."/>
            <person name="Loveland J.E."/>
            <person name="Lovell J.D."/>
            <person name="Lozado R."/>
            <person name="Lu J."/>
            <person name="Lyne R."/>
            <person name="Ma J."/>
            <person name="Maheshwari M."/>
            <person name="Matthews L.H."/>
            <person name="McDowall J."/>
            <person name="McLaren S."/>
            <person name="McMurray A."/>
            <person name="Meidl P."/>
            <person name="Meitinger T."/>
            <person name="Milne S."/>
            <person name="Miner G."/>
            <person name="Mistry S.L."/>
            <person name="Morgan M."/>
            <person name="Morris S."/>
            <person name="Mueller I."/>
            <person name="Mullikin J.C."/>
            <person name="Nguyen N."/>
            <person name="Nordsiek G."/>
            <person name="Nyakatura G."/>
            <person name="O'dell C.N."/>
            <person name="Okwuonu G."/>
            <person name="Palmer S."/>
            <person name="Pandian R."/>
            <person name="Parker D."/>
            <person name="Parrish J."/>
            <person name="Pasternak S."/>
            <person name="Patel D."/>
            <person name="Pearce A.V."/>
            <person name="Pearson D.M."/>
            <person name="Pelan S.E."/>
            <person name="Perez L."/>
            <person name="Porter K.M."/>
            <person name="Ramsey Y."/>
            <person name="Reichwald K."/>
            <person name="Rhodes S."/>
            <person name="Ridler K.A."/>
            <person name="Schlessinger D."/>
            <person name="Schueler M.G."/>
            <person name="Sehra H.K."/>
            <person name="Shaw-Smith C."/>
            <person name="Shen H."/>
            <person name="Sheridan E.M."/>
            <person name="Shownkeen R."/>
            <person name="Skuce C.D."/>
            <person name="Smith M.L."/>
            <person name="Sotheran E.C."/>
            <person name="Steingruber H.E."/>
            <person name="Steward C.A."/>
            <person name="Storey R."/>
            <person name="Swann R.M."/>
            <person name="Swarbreck D."/>
            <person name="Tabor P.E."/>
            <person name="Taudien S."/>
            <person name="Taylor T."/>
            <person name="Teague B."/>
            <person name="Thomas K."/>
            <person name="Thorpe A."/>
            <person name="Timms K."/>
            <person name="Tracey A."/>
            <person name="Trevanion S."/>
            <person name="Tromans A.C."/>
            <person name="d'Urso M."/>
            <person name="Verduzco D."/>
            <person name="Villasana D."/>
            <person name="Waldron L."/>
            <person name="Wall M."/>
            <person name="Wang Q."/>
            <person name="Warren J."/>
            <person name="Warry G.L."/>
            <person name="Wei X."/>
            <person name="West A."/>
            <person name="Whitehead S.L."/>
            <person name="Whiteley M.N."/>
            <person name="Wilkinson J.E."/>
            <person name="Willey D.L."/>
            <person name="Williams G."/>
            <person name="Williams L."/>
            <person name="Williamson A."/>
            <person name="Williamson H."/>
            <person name="Wilming L."/>
            <person name="Woodmansey R.L."/>
            <person name="Wray P.W."/>
            <person name="Yen J."/>
            <person name="Zhang J."/>
            <person name="Zhou J."/>
            <person name="Zoghbi H."/>
            <person name="Zorilla S."/>
            <person name="Buck D."/>
            <person name="Reinhardt R."/>
            <person name="Poustka A."/>
            <person name="Rosenthal A."/>
            <person name="Lehrach H."/>
            <person name="Meindl A."/>
            <person name="Minx P.J."/>
            <person name="Hillier L.W."/>
            <person name="Willard H.F."/>
            <person name="Wilson R.K."/>
            <person name="Waterston R.H."/>
            <person name="Rice C.M."/>
            <person name="Vaudin M."/>
            <person name="Coulson A."/>
            <person name="Nelson D.L."/>
            <person name="Weinstock G."/>
            <person name="Sulston J.E."/>
            <person name="Durbin R.M."/>
            <person name="Hubbard T."/>
            <person name="Gibbs R.A."/>
            <person name="Beck S."/>
            <person name="Rogers J."/>
            <person name="Bentley D.R."/>
        </authorList>
    </citation>
    <scope>NUCLEOTIDE SEQUENCE [LARGE SCALE GENOMIC DNA]</scope>
</reference>
<reference key="3">
    <citation type="journal article" date="2004" name="Genome Res.">
        <title>The status, quality, and expansion of the NIH full-length cDNA project: the Mammalian Gene Collection (MGC).</title>
        <authorList>
            <consortium name="The MGC Project Team"/>
        </authorList>
    </citation>
    <scope>NUCLEOTIDE SEQUENCE [LARGE SCALE MRNA] (ISOFORMS 1 AND 2)</scope>
    <source>
        <tissue>Brain cortex</tissue>
    </source>
</reference>
<reference key="4">
    <citation type="journal article" date="2012" name="Proc. Natl. Acad. Sci. U.S.A.">
        <title>N-terminal acetylome analyses and functional insights of the N-terminal acetyltransferase NatB.</title>
        <authorList>
            <person name="Van Damme P."/>
            <person name="Lasa M."/>
            <person name="Polevoda B."/>
            <person name="Gazquez C."/>
            <person name="Elosegui-Artola A."/>
            <person name="Kim D.S."/>
            <person name="De Juan-Pardo E."/>
            <person name="Demeyer K."/>
            <person name="Hole K."/>
            <person name="Larrea E."/>
            <person name="Timmerman E."/>
            <person name="Prieto J."/>
            <person name="Arnesen T."/>
            <person name="Sherman F."/>
            <person name="Gevaert K."/>
            <person name="Aldabe R."/>
        </authorList>
    </citation>
    <scope>IDENTIFICATION BY MASS SPECTROMETRY [LARGE SCALE ANALYSIS]</scope>
</reference>
<reference key="5">
    <citation type="journal article" date="2017" name="J. Biol. Chem.">
        <title>A transcriptional coregulator, SPIN-DOC, attenuates the coactivator activity of Spindlin1.</title>
        <authorList>
            <person name="Bae N."/>
            <person name="Gao M."/>
            <person name="Li X."/>
            <person name="Premkumar T."/>
            <person name="Sbardella G."/>
            <person name="Chen J."/>
            <person name="Bedford M.T."/>
        </authorList>
    </citation>
    <scope>FUNCTION</scope>
    <scope>INTERACTION WITH C11ORF84/SPINDOC</scope>
</reference>
<organism>
    <name type="scientific">Homo sapiens</name>
    <name type="common">Human</name>
    <dbReference type="NCBI Taxonomy" id="9606"/>
    <lineage>
        <taxon>Eukaryota</taxon>
        <taxon>Metazoa</taxon>
        <taxon>Chordata</taxon>
        <taxon>Craniata</taxon>
        <taxon>Vertebrata</taxon>
        <taxon>Euteleostomi</taxon>
        <taxon>Mammalia</taxon>
        <taxon>Eutheria</taxon>
        <taxon>Euarchontoglires</taxon>
        <taxon>Primates</taxon>
        <taxon>Haplorrhini</taxon>
        <taxon>Catarrhini</taxon>
        <taxon>Hominidae</taxon>
        <taxon>Homo</taxon>
    </lineage>
</organism>
<gene>
    <name type="primary">SPIN3</name>
</gene>
<proteinExistence type="evidence at protein level"/>